<evidence type="ECO:0000303" key="1">
    <source>
    </source>
</evidence>
<evidence type="ECO:0000305" key="2"/>
<evidence type="ECO:0000305" key="3">
    <source>
    </source>
</evidence>
<name>3004L_ASFM2</name>
<sequence>MLSLFNIALKALIMKHNVEFLKRDKEILTHLGLCCKDYVIIDKCSECGNICPNGQQHGDTCININYLLIYAVKRDNYMLAYRLLSWGANEKFANCFRRPLPNLKPPLPKKELTPKEIKQLAYDHFHNDSELITIFEVFRKCRHINDCLNFFYKKNTEFEIYFARLHVYSKTFYGKGWYWFCIFIAVKHSMEHALKKITKTFTPTFYNKTTLNLVLFLSACFYENVEWMKNFFYKGNKKIQQRMLNYGMEWAATHGKVRTFICCYTLGGTASLKLYQKAYQNEKFMIMALCSYLGNIQINNPWESLNPYTMVQNKEKFLPLKFSEETQYFYI</sequence>
<organism>
    <name type="scientific">African swine fever virus (isolate Tick/Malawi/Lil 20-1/1983)</name>
    <name type="common">ASFV</name>
    <dbReference type="NCBI Taxonomy" id="10500"/>
    <lineage>
        <taxon>Viruses</taxon>
        <taxon>Varidnaviria</taxon>
        <taxon>Bamfordvirae</taxon>
        <taxon>Nucleocytoviricota</taxon>
        <taxon>Pokkesviricetes</taxon>
        <taxon>Asfuvirales</taxon>
        <taxon>Asfarviridae</taxon>
        <taxon>Asfivirus</taxon>
        <taxon>African swine fever virus</taxon>
    </lineage>
</organism>
<organismHost>
    <name type="scientific">Ornithodoros</name>
    <name type="common">relapsing fever ticks</name>
    <dbReference type="NCBI Taxonomy" id="6937"/>
</organismHost>
<organismHost>
    <name type="scientific">Phacochoerus aethiopicus</name>
    <name type="common">Warthog</name>
    <dbReference type="NCBI Taxonomy" id="85517"/>
</organismHost>
<organismHost>
    <name type="scientific">Phacochoerus africanus</name>
    <name type="common">Warthog</name>
    <dbReference type="NCBI Taxonomy" id="41426"/>
</organismHost>
<organismHost>
    <name type="scientific">Potamochoerus larvatus</name>
    <name type="common">Bushpig</name>
    <dbReference type="NCBI Taxonomy" id="273792"/>
</organismHost>
<organismHost>
    <name type="scientific">Sus scrofa</name>
    <name type="common">Pig</name>
    <dbReference type="NCBI Taxonomy" id="9823"/>
</organismHost>
<dbReference type="EMBL" id="AY261361">
    <property type="status" value="NOT_ANNOTATED_CDS"/>
    <property type="molecule type" value="Genomic_DNA"/>
</dbReference>
<dbReference type="Proteomes" id="UP000000860">
    <property type="component" value="Segment"/>
</dbReference>
<reference key="1">
    <citation type="submission" date="2003-03" db="EMBL/GenBank/DDBJ databases">
        <title>African swine fever virus genomes.</title>
        <authorList>
            <person name="Kutish G.F."/>
            <person name="Rock D.L."/>
        </authorList>
    </citation>
    <scope>NUCLEOTIDE SEQUENCE [LARGE SCALE GENOMIC DNA]</scope>
</reference>
<reference key="2">
    <citation type="journal article" date="1994" name="Virology">
        <title>Two novel multigene families, 530 and 300, in the terminal variable regions of African swine fever virus genome.</title>
        <authorList>
            <person name="Yozawa T."/>
            <person name="Kutish G.F."/>
            <person name="Afonso C.L."/>
            <person name="Lu Z."/>
            <person name="Rock D.L."/>
        </authorList>
    </citation>
    <scope>CHARACTERIZATION</scope>
</reference>
<accession>P0C9L6</accession>
<proteinExistence type="evidence at protein level"/>
<protein>
    <recommendedName>
        <fullName>Protein MGF 300-4L</fullName>
    </recommendedName>
    <alternativeName>
        <fullName evidence="1">L2HL</fullName>
    </alternativeName>
</protein>
<comment type="miscellaneous">
    <text evidence="3">Encoded by variable regions comprise the left 35-kb and the right 15-kb ends of the viral genome. Transcribed in host macrophages.</text>
</comment>
<comment type="similarity">
    <text evidence="2">Belongs to the asfivirus MGF 300 family.</text>
</comment>
<gene>
    <name type="ordered locus">Mal-026</name>
</gene>
<feature type="chain" id="PRO_0000373242" description="Protein MGF 300-4L">
    <location>
        <begin position="1"/>
        <end position="331"/>
    </location>
</feature>